<evidence type="ECO:0000250" key="1">
    <source>
        <dbReference type="UniProtKB" id="Q9Z1N7"/>
    </source>
</evidence>
<evidence type="ECO:0000255" key="2">
    <source>
        <dbReference type="PROSITE-ProRule" id="PRU00355"/>
    </source>
</evidence>
<evidence type="ECO:0000255" key="3">
    <source>
        <dbReference type="PROSITE-ProRule" id="PRU00819"/>
    </source>
</evidence>
<evidence type="ECO:0000256" key="4">
    <source>
        <dbReference type="SAM" id="MobiDB-lite"/>
    </source>
</evidence>
<evidence type="ECO:0000269" key="5">
    <source>
    </source>
</evidence>
<evidence type="ECO:0000269" key="6">
    <source>
    </source>
</evidence>
<evidence type="ECO:0000269" key="7">
    <source>
    </source>
</evidence>
<evidence type="ECO:0000303" key="8">
    <source>
    </source>
</evidence>
<evidence type="ECO:0000303" key="9">
    <source ref="2"/>
</evidence>
<evidence type="ECO:0000305" key="10"/>
<evidence type="ECO:0007744" key="11">
    <source>
    </source>
</evidence>
<evidence type="ECO:0007744" key="12">
    <source>
    </source>
</evidence>
<evidence type="ECO:0007744" key="13">
    <source>
    </source>
</evidence>
<evidence type="ECO:0007744" key="14">
    <source>
    </source>
</evidence>
<evidence type="ECO:0007744" key="15">
    <source>
    </source>
</evidence>
<proteinExistence type="evidence at protein level"/>
<name>ARI3B_HUMAN</name>
<dbReference type="EMBL" id="AF116846">
    <property type="protein sequence ID" value="AAD09133.1"/>
    <property type="molecule type" value="mRNA"/>
</dbReference>
<dbReference type="EMBL" id="AB208830">
    <property type="protein sequence ID" value="BAD92067.1"/>
    <property type="status" value="ALT_INIT"/>
    <property type="molecule type" value="mRNA"/>
</dbReference>
<dbReference type="EMBL" id="AC100835">
    <property type="status" value="NOT_ANNOTATED_CDS"/>
    <property type="molecule type" value="Genomic_DNA"/>
</dbReference>
<dbReference type="EMBL" id="BC041792">
    <property type="protein sequence ID" value="AAH41792.1"/>
    <property type="molecule type" value="mRNA"/>
</dbReference>
<dbReference type="CCDS" id="CCDS10264.1">
    <molecule id="Q8IVW6-4"/>
</dbReference>
<dbReference type="CCDS" id="CCDS76777.1">
    <molecule id="Q8IVW6-1"/>
</dbReference>
<dbReference type="RefSeq" id="NP_001294868.1">
    <molecule id="Q8IVW6-1"/>
    <property type="nucleotide sequence ID" value="NM_001307939.2"/>
</dbReference>
<dbReference type="RefSeq" id="NP_006456.1">
    <molecule id="Q8IVW6-4"/>
    <property type="nucleotide sequence ID" value="NM_006465.4"/>
</dbReference>
<dbReference type="SMR" id="Q8IVW6"/>
<dbReference type="BioGRID" id="115865">
    <property type="interactions" value="113"/>
</dbReference>
<dbReference type="FunCoup" id="Q8IVW6">
    <property type="interactions" value="2780"/>
</dbReference>
<dbReference type="IntAct" id="Q8IVW6">
    <property type="interactions" value="70"/>
</dbReference>
<dbReference type="MINT" id="Q8IVW6"/>
<dbReference type="STRING" id="9606.ENSP00000477878"/>
<dbReference type="GlyCosmos" id="Q8IVW6">
    <property type="glycosylation" value="3 sites, 2 glycans"/>
</dbReference>
<dbReference type="GlyGen" id="Q8IVW6">
    <property type="glycosylation" value="8 sites, 2 O-linked glycans (5 sites)"/>
</dbReference>
<dbReference type="iPTMnet" id="Q8IVW6"/>
<dbReference type="PhosphoSitePlus" id="Q8IVW6"/>
<dbReference type="BioMuta" id="ARID3B"/>
<dbReference type="DMDM" id="152013359"/>
<dbReference type="jPOST" id="Q8IVW6"/>
<dbReference type="MassIVE" id="Q8IVW6"/>
<dbReference type="PaxDb" id="9606-ENSP00000343126"/>
<dbReference type="PeptideAtlas" id="Q8IVW6"/>
<dbReference type="ProteomicsDB" id="70785">
    <molecule id="Q8IVW6-1"/>
</dbReference>
<dbReference type="ProteomicsDB" id="70786">
    <molecule id="Q8IVW6-3"/>
</dbReference>
<dbReference type="ProteomicsDB" id="70787">
    <molecule id="Q8IVW6-4"/>
</dbReference>
<dbReference type="Pumba" id="Q8IVW6"/>
<dbReference type="Antibodypedia" id="26965">
    <property type="antibodies" value="198 antibodies from 22 providers"/>
</dbReference>
<dbReference type="DNASU" id="10620"/>
<dbReference type="Ensembl" id="ENST00000346246.10">
    <molecule id="Q8IVW6-4"/>
    <property type="protein sequence ID" value="ENSP00000343126.5"/>
    <property type="gene ID" value="ENSG00000179361.18"/>
</dbReference>
<dbReference type="Ensembl" id="ENST00000622429.1">
    <molecule id="Q8IVW6-1"/>
    <property type="protein sequence ID" value="ENSP00000477878.1"/>
    <property type="gene ID" value="ENSG00000179361.18"/>
</dbReference>
<dbReference type="GeneID" id="10620"/>
<dbReference type="KEGG" id="hsa:10620"/>
<dbReference type="MANE-Select" id="ENST00000346246.10">
    <molecule id="Q8IVW6-4"/>
    <property type="protein sequence ID" value="ENSP00000343126.5"/>
    <property type="RefSeq nucleotide sequence ID" value="NM_006465.4"/>
    <property type="RefSeq protein sequence ID" value="NP_006456.1"/>
</dbReference>
<dbReference type="UCSC" id="uc002ayd.4">
    <molecule id="Q8IVW6-1"/>
    <property type="organism name" value="human"/>
</dbReference>
<dbReference type="AGR" id="HGNC:14350"/>
<dbReference type="CTD" id="10620"/>
<dbReference type="DisGeNET" id="10620"/>
<dbReference type="GeneCards" id="ARID3B"/>
<dbReference type="HGNC" id="HGNC:14350">
    <property type="gene designation" value="ARID3B"/>
</dbReference>
<dbReference type="HPA" id="ENSG00000179361">
    <property type="expression patterns" value="Tissue enhanced (bone)"/>
</dbReference>
<dbReference type="MIM" id="612457">
    <property type="type" value="gene"/>
</dbReference>
<dbReference type="neXtProt" id="NX_Q8IVW6"/>
<dbReference type="OpenTargets" id="ENSG00000179361"/>
<dbReference type="PharmGKB" id="PA134896829"/>
<dbReference type="VEuPathDB" id="HostDB:ENSG00000179361"/>
<dbReference type="eggNOG" id="KOG2744">
    <property type="taxonomic scope" value="Eukaryota"/>
</dbReference>
<dbReference type="GeneTree" id="ENSGT00940000156052"/>
<dbReference type="HOGENOM" id="CLU_026952_2_0_1"/>
<dbReference type="InParanoid" id="Q8IVW6"/>
<dbReference type="OMA" id="SGRQTWR"/>
<dbReference type="OrthoDB" id="10044343at2759"/>
<dbReference type="PAN-GO" id="Q8IVW6">
    <property type="GO annotations" value="3 GO annotations based on evolutionary models"/>
</dbReference>
<dbReference type="PhylomeDB" id="Q8IVW6"/>
<dbReference type="TreeFam" id="TF320364"/>
<dbReference type="PathwayCommons" id="Q8IVW6"/>
<dbReference type="SignaLink" id="Q8IVW6"/>
<dbReference type="BioGRID-ORCS" id="10620">
    <property type="hits" value="31 hits in 1144 CRISPR screens"/>
</dbReference>
<dbReference type="GeneWiki" id="ARID3B"/>
<dbReference type="GenomeRNAi" id="10620"/>
<dbReference type="Pharos" id="Q8IVW6">
    <property type="development level" value="Tbio"/>
</dbReference>
<dbReference type="PRO" id="PR:Q8IVW6"/>
<dbReference type="Proteomes" id="UP000005640">
    <property type="component" value="Chromosome 15"/>
</dbReference>
<dbReference type="RNAct" id="Q8IVW6">
    <property type="molecule type" value="protein"/>
</dbReference>
<dbReference type="Bgee" id="ENSG00000179361">
    <property type="expression patterns" value="Expressed in oocyte and 163 other cell types or tissues"/>
</dbReference>
<dbReference type="ExpressionAtlas" id="Q8IVW6">
    <property type="expression patterns" value="baseline and differential"/>
</dbReference>
<dbReference type="GO" id="GO:0005654">
    <property type="term" value="C:nucleoplasm"/>
    <property type="evidence" value="ECO:0000314"/>
    <property type="project" value="HPA"/>
</dbReference>
<dbReference type="GO" id="GO:0005634">
    <property type="term" value="C:nucleus"/>
    <property type="evidence" value="ECO:0000318"/>
    <property type="project" value="GO_Central"/>
</dbReference>
<dbReference type="GO" id="GO:0003677">
    <property type="term" value="F:DNA binding"/>
    <property type="evidence" value="ECO:0000318"/>
    <property type="project" value="GO_Central"/>
</dbReference>
<dbReference type="GO" id="GO:0045944">
    <property type="term" value="P:positive regulation of transcription by RNA polymerase II"/>
    <property type="evidence" value="ECO:0007669"/>
    <property type="project" value="Ensembl"/>
</dbReference>
<dbReference type="GO" id="GO:0006357">
    <property type="term" value="P:regulation of transcription by RNA polymerase II"/>
    <property type="evidence" value="ECO:0000318"/>
    <property type="project" value="GO_Central"/>
</dbReference>
<dbReference type="CDD" id="cd16879">
    <property type="entry name" value="ARID_ARID3B"/>
    <property type="match status" value="1"/>
</dbReference>
<dbReference type="FunFam" id="1.10.150.60:FF:000008">
    <property type="entry name" value="Putative AT-rich interactive domain-containing protein 3B"/>
    <property type="match status" value="1"/>
</dbReference>
<dbReference type="Gene3D" id="1.10.150.60">
    <property type="entry name" value="ARID DNA-binding domain"/>
    <property type="match status" value="1"/>
</dbReference>
<dbReference type="InterPro" id="IPR045147">
    <property type="entry name" value="ARI3A/B/C"/>
</dbReference>
<dbReference type="InterPro" id="IPR001606">
    <property type="entry name" value="ARID_dom"/>
</dbReference>
<dbReference type="InterPro" id="IPR036431">
    <property type="entry name" value="ARID_dom_sf"/>
</dbReference>
<dbReference type="InterPro" id="IPR023334">
    <property type="entry name" value="REKLES_domain"/>
</dbReference>
<dbReference type="PANTHER" id="PTHR15348:SF3">
    <property type="entry name" value="AT-RICH INTERACTIVE DOMAIN-CONTAINING PROTEIN 3B"/>
    <property type="match status" value="1"/>
</dbReference>
<dbReference type="PANTHER" id="PTHR15348">
    <property type="entry name" value="AT-RICH INTERACTIVE DOMAIN-CONTAINING PROTEIN ARID DOMAIN- CONTAINING PROTEIN DEAD RINGER PROTEIN B-CELL REGULATOR OF IGH TRANSCRIPTION BRIGHT"/>
    <property type="match status" value="1"/>
</dbReference>
<dbReference type="Pfam" id="PF01388">
    <property type="entry name" value="ARID"/>
    <property type="match status" value="1"/>
</dbReference>
<dbReference type="SMART" id="SM01014">
    <property type="entry name" value="ARID"/>
    <property type="match status" value="1"/>
</dbReference>
<dbReference type="SMART" id="SM00501">
    <property type="entry name" value="BRIGHT"/>
    <property type="match status" value="1"/>
</dbReference>
<dbReference type="SUPFAM" id="SSF46774">
    <property type="entry name" value="ARID-like"/>
    <property type="match status" value="1"/>
</dbReference>
<dbReference type="PROSITE" id="PS51011">
    <property type="entry name" value="ARID"/>
    <property type="match status" value="1"/>
</dbReference>
<dbReference type="PROSITE" id="PS51486">
    <property type="entry name" value="REKLES"/>
    <property type="match status" value="1"/>
</dbReference>
<sequence>MEPLQQQQQQQQQQQKQPHLAPLQMDAREKQGQQMREAQFLYAQKLVTQPTLLSATAGRPSGSTPLGPLARVPPTAAVAQVFERGNMNSEPEEEDGGLEDEDGDDEVAEVAEKETQAASKYFHVQKVARQDPRVAPMSNLLPAPGLPPHGQQAKEDHTKDASKASPSVSTAGQPNWNLDEQLKQNGGLAWSDDADGGRGREISRDFAKLYELDGDPERKEFLDDLFVFMQKRGTPINRIPIMAKQILDLYMLYKLVTEKGGLVEIINKKIWREITKGLNLPTSITSAAFTLRTQYMKYLYAYECEKKALSSPAELQAAIDGNRREGRRPSYSSSLFGYSPAAATAAAAAGAPALLSPPKIRFPILGLGSSSGTNTSSPRISPATTLRKGDGAPVTTVPVPNRLAVPVTLASQQAGTRTAALEQLRERLESGEPAEKKASRLSEEEQRLVQQAFQRNFFSMARQLPMKIRINGRAEDRAEASAAALNLTTSSIGSINMSVDIDGTTYAGVLFAQKPVVHLITGSAPQSLGSSASSSSSSHCSPSPTSSRGTPSAEPSTSWSL</sequence>
<comment type="function">
    <text evidence="6 7">Transcription factor which may be involved in neuroblastoma growth and malignant transformation. Favors nuclear targeting of ARID3A.</text>
</comment>
<comment type="subunit">
    <text evidence="5 7">Heterodimer with ARID3A. Interacts with unphosphorylated RB1.</text>
</comment>
<comment type="interaction">
    <interactant intactId="EBI-5458329">
        <id>Q8IVW6</id>
    </interactant>
    <interactant intactId="EBI-11173743">
        <id>O60741</id>
        <label>HCN1</label>
    </interactant>
    <organismsDiffer>false</organismsDiffer>
    <experiments>6</experiments>
</comment>
<comment type="interaction">
    <interactant intactId="EBI-5458329">
        <id>Q8IVW6</id>
    </interactant>
    <interactant intactId="EBI-717399">
        <id>Q9BSI4</id>
        <label>TINF2</label>
    </interactant>
    <organismsDiffer>false</organismsDiffer>
    <experiments>2</experiments>
</comment>
<comment type="subcellular location">
    <subcellularLocation>
        <location evidence="2 5 7">Nucleus</location>
    </subcellularLocation>
</comment>
<comment type="alternative products">
    <event type="alternative splicing"/>
    <isoform>
        <id>Q8IVW6-1</id>
        <name>1</name>
        <sequence type="displayed"/>
    </isoform>
    <isoform>
        <id>Q8IVW6-3</id>
        <name>3</name>
        <sequence type="described" ref="VSP_026773 VSP_026774"/>
    </isoform>
    <isoform>
        <id>Q8IVW6-4</id>
        <name>4</name>
        <sequence type="described" ref="VSP_039860"/>
    </isoform>
</comment>
<comment type="tissue specificity">
    <text evidence="5 6">Expressed in placenta, testis and leukocytes. Expressed in neuroblastoma. Present in K-562 erythrocytic leukemia cell line (at protein level).</text>
</comment>
<comment type="sequence caution" evidence="10">
    <conflict type="erroneous initiation">
        <sequence resource="EMBL-CDS" id="BAD92067"/>
    </conflict>
    <text>Extended N-terminus.</text>
</comment>
<organism>
    <name type="scientific">Homo sapiens</name>
    <name type="common">Human</name>
    <dbReference type="NCBI Taxonomy" id="9606"/>
    <lineage>
        <taxon>Eukaryota</taxon>
        <taxon>Metazoa</taxon>
        <taxon>Chordata</taxon>
        <taxon>Craniata</taxon>
        <taxon>Vertebrata</taxon>
        <taxon>Euteleostomi</taxon>
        <taxon>Mammalia</taxon>
        <taxon>Eutheria</taxon>
        <taxon>Euarchontoglires</taxon>
        <taxon>Primates</taxon>
        <taxon>Haplorrhini</taxon>
        <taxon>Catarrhini</taxon>
        <taxon>Hominidae</taxon>
        <taxon>Homo</taxon>
    </lineage>
</organism>
<keyword id="KW-0007">Acetylation</keyword>
<keyword id="KW-0025">Alternative splicing</keyword>
<keyword id="KW-0238">DNA-binding</keyword>
<keyword id="KW-0488">Methylation</keyword>
<keyword id="KW-0539">Nucleus</keyword>
<keyword id="KW-0597">Phosphoprotein</keyword>
<keyword id="KW-1267">Proteomics identification</keyword>
<keyword id="KW-1185">Reference proteome</keyword>
<keyword id="KW-0804">Transcription</keyword>
<keyword id="KW-0805">Transcription regulation</keyword>
<keyword id="KW-0043">Tumor suppressor</keyword>
<reference key="1">
    <citation type="journal article" date="1999" name="Cancer Res.">
        <title>Bdp, a new member of a family of DNA-binding proteins, associates with the retinoblastoma gene product.</title>
        <authorList>
            <person name="Numata S."/>
            <person name="Claudio P.P."/>
            <person name="Dean C."/>
            <person name="Giordano A."/>
            <person name="Croce C.M."/>
        </authorList>
    </citation>
    <scope>NUCLEOTIDE SEQUENCE [MRNA] (ISOFORM 4)</scope>
    <scope>TISSUE SPECIFICITY</scope>
    <scope>SUBCELLULAR LOCATION</scope>
    <scope>DNA-BINDING</scope>
    <scope>INTERACTION WITH RB1</scope>
    <scope>MUTAGENESIS OF PRO-240 AND TRP-271</scope>
    <source>
        <tissue>Testis</tissue>
    </source>
</reference>
<reference key="2">
    <citation type="submission" date="2005-03" db="EMBL/GenBank/DDBJ databases">
        <authorList>
            <person name="Totoki Y."/>
            <person name="Toyoda A."/>
            <person name="Takeda T."/>
            <person name="Sakaki Y."/>
            <person name="Tanaka A."/>
            <person name="Yokoyama S."/>
            <person name="Ohara O."/>
            <person name="Nagase T."/>
            <person name="Kikuno R.F."/>
        </authorList>
    </citation>
    <scope>NUCLEOTIDE SEQUENCE [LARGE SCALE MRNA] (ISOFORM 3)</scope>
    <source>
        <tissue>Brain</tissue>
    </source>
</reference>
<reference key="3">
    <citation type="journal article" date="2006" name="Nature">
        <title>Analysis of the DNA sequence and duplication history of human chromosome 15.</title>
        <authorList>
            <person name="Zody M.C."/>
            <person name="Garber M."/>
            <person name="Sharpe T."/>
            <person name="Young S.K."/>
            <person name="Rowen L."/>
            <person name="O'Neill K."/>
            <person name="Whittaker C.A."/>
            <person name="Kamal M."/>
            <person name="Chang J.L."/>
            <person name="Cuomo C.A."/>
            <person name="Dewar K."/>
            <person name="FitzGerald M.G."/>
            <person name="Kodira C.D."/>
            <person name="Madan A."/>
            <person name="Qin S."/>
            <person name="Yang X."/>
            <person name="Abbasi N."/>
            <person name="Abouelleil A."/>
            <person name="Arachchi H.M."/>
            <person name="Baradarani L."/>
            <person name="Birditt B."/>
            <person name="Bloom S."/>
            <person name="Bloom T."/>
            <person name="Borowsky M.L."/>
            <person name="Burke J."/>
            <person name="Butler J."/>
            <person name="Cook A."/>
            <person name="DeArellano K."/>
            <person name="DeCaprio D."/>
            <person name="Dorris L. III"/>
            <person name="Dors M."/>
            <person name="Eichler E.E."/>
            <person name="Engels R."/>
            <person name="Fahey J."/>
            <person name="Fleetwood P."/>
            <person name="Friedman C."/>
            <person name="Gearin G."/>
            <person name="Hall J.L."/>
            <person name="Hensley G."/>
            <person name="Johnson E."/>
            <person name="Jones C."/>
            <person name="Kamat A."/>
            <person name="Kaur A."/>
            <person name="Locke D.P."/>
            <person name="Madan A."/>
            <person name="Munson G."/>
            <person name="Jaffe D.B."/>
            <person name="Lui A."/>
            <person name="Macdonald P."/>
            <person name="Mauceli E."/>
            <person name="Naylor J.W."/>
            <person name="Nesbitt R."/>
            <person name="Nicol R."/>
            <person name="O'Leary S.B."/>
            <person name="Ratcliffe A."/>
            <person name="Rounsley S."/>
            <person name="She X."/>
            <person name="Sneddon K.M.B."/>
            <person name="Stewart S."/>
            <person name="Sougnez C."/>
            <person name="Stone S.M."/>
            <person name="Topham K."/>
            <person name="Vincent D."/>
            <person name="Wang S."/>
            <person name="Zimmer A.R."/>
            <person name="Birren B.W."/>
            <person name="Hood L."/>
            <person name="Lander E.S."/>
            <person name="Nusbaum C."/>
        </authorList>
    </citation>
    <scope>NUCLEOTIDE SEQUENCE [LARGE SCALE GENOMIC DNA]</scope>
</reference>
<reference key="4">
    <citation type="journal article" date="2004" name="Genome Res.">
        <title>The status, quality, and expansion of the NIH full-length cDNA project: the Mammalian Gene Collection (MGC).</title>
        <authorList>
            <consortium name="The MGC Project Team"/>
        </authorList>
    </citation>
    <scope>NUCLEOTIDE SEQUENCE [LARGE SCALE MRNA] (ISOFORM 1)</scope>
    <source>
        <tissue>Testis</tissue>
    </source>
</reference>
<reference key="5">
    <citation type="journal article" date="2006" name="Cancer Res.">
        <title>ARID3B induces malignant transformation of mouse embryonic fibroblasts and is strongly associated with malignant neuroblastoma.</title>
        <authorList>
            <person name="Kobayashi K."/>
            <person name="Era T."/>
            <person name="Takebe A."/>
            <person name="Jakt L.M."/>
            <person name="Nishikawa S."/>
        </authorList>
    </citation>
    <scope>FUNCTION</scope>
    <scope>TISSUE SPECIFICITY</scope>
</reference>
<reference key="6">
    <citation type="journal article" date="2007" name="J. Biol. Chem.">
        <title>REKLES is an ARID3-restricted multifunctional domain.</title>
        <authorList>
            <person name="Kim D."/>
            <person name="Probst L."/>
            <person name="Das C."/>
            <person name="Tucker P.W."/>
        </authorList>
    </citation>
    <scope>INTERACTION WITH ARID3A</scope>
    <scope>SUBCELLULAR LOCATION</scope>
    <scope>FUNCTION</scope>
</reference>
<reference key="7">
    <citation type="journal article" date="2008" name="Proc. Natl. Acad. Sci. U.S.A.">
        <title>A quantitative atlas of mitotic phosphorylation.</title>
        <authorList>
            <person name="Dephoure N."/>
            <person name="Zhou C."/>
            <person name="Villen J."/>
            <person name="Beausoleil S.A."/>
            <person name="Bakalarski C.E."/>
            <person name="Elledge S.J."/>
            <person name="Gygi S.P."/>
        </authorList>
    </citation>
    <scope>PHOSPHORYLATION [LARGE SCALE ANALYSIS] AT SER-89</scope>
    <scope>IDENTIFICATION BY MASS SPECTROMETRY [LARGE SCALE ANALYSIS]</scope>
    <source>
        <tissue>Cervix carcinoma</tissue>
    </source>
</reference>
<reference key="8">
    <citation type="journal article" date="2009" name="Anal. Chem.">
        <title>Lys-N and trypsin cover complementary parts of the phosphoproteome in a refined SCX-based approach.</title>
        <authorList>
            <person name="Gauci S."/>
            <person name="Helbig A.O."/>
            <person name="Slijper M."/>
            <person name="Krijgsveld J."/>
            <person name="Heck A.J."/>
            <person name="Mohammed S."/>
        </authorList>
    </citation>
    <scope>ACETYLATION [LARGE SCALE ANALYSIS] AT MET-1</scope>
    <scope>IDENTIFICATION BY MASS SPECTROMETRY [LARGE SCALE ANALYSIS]</scope>
</reference>
<reference key="9">
    <citation type="journal article" date="2009" name="Sci. Signal.">
        <title>Quantitative phosphoproteomic analysis of T cell receptor signaling reveals system-wide modulation of protein-protein interactions.</title>
        <authorList>
            <person name="Mayya V."/>
            <person name="Lundgren D.H."/>
            <person name="Hwang S.-I."/>
            <person name="Rezaul K."/>
            <person name="Wu L."/>
            <person name="Eng J.K."/>
            <person name="Rodionov V."/>
            <person name="Han D.K."/>
        </authorList>
    </citation>
    <scope>PHOSPHORYLATION [LARGE SCALE ANALYSIS] AT SER-89</scope>
    <scope>IDENTIFICATION BY MASS SPECTROMETRY [LARGE SCALE ANALYSIS]</scope>
    <source>
        <tissue>Leukemic T-cell</tissue>
    </source>
</reference>
<reference key="10">
    <citation type="journal article" date="2011" name="BMC Syst. Biol.">
        <title>Initial characterization of the human central proteome.</title>
        <authorList>
            <person name="Burkard T.R."/>
            <person name="Planyavsky M."/>
            <person name="Kaupe I."/>
            <person name="Breitwieser F.P."/>
            <person name="Buerckstuemmer T."/>
            <person name="Bennett K.L."/>
            <person name="Superti-Furga G."/>
            <person name="Colinge J."/>
        </authorList>
    </citation>
    <scope>IDENTIFICATION BY MASS SPECTROMETRY [LARGE SCALE ANALYSIS]</scope>
</reference>
<reference key="11">
    <citation type="journal article" date="2011" name="Sci. Signal.">
        <title>System-wide temporal characterization of the proteome and phosphoproteome of human embryonic stem cell differentiation.</title>
        <authorList>
            <person name="Rigbolt K.T."/>
            <person name="Prokhorova T.A."/>
            <person name="Akimov V."/>
            <person name="Henningsen J."/>
            <person name="Johansen P.T."/>
            <person name="Kratchmarova I."/>
            <person name="Kassem M."/>
            <person name="Mann M."/>
            <person name="Olsen J.V."/>
            <person name="Blagoev B."/>
        </authorList>
    </citation>
    <scope>PHOSPHORYLATION [LARGE SCALE ANALYSIS] AT SER-89</scope>
    <scope>IDENTIFICATION BY MASS SPECTROMETRY [LARGE SCALE ANALYSIS]</scope>
</reference>
<reference key="12">
    <citation type="journal article" date="2013" name="J. Proteome Res.">
        <title>Toward a comprehensive characterization of a human cancer cell phosphoproteome.</title>
        <authorList>
            <person name="Zhou H."/>
            <person name="Di Palma S."/>
            <person name="Preisinger C."/>
            <person name="Peng M."/>
            <person name="Polat A.N."/>
            <person name="Heck A.J."/>
            <person name="Mohammed S."/>
        </authorList>
    </citation>
    <scope>PHOSPHORYLATION [LARGE SCALE ANALYSIS] AT SER-89; SER-165 AND SER-311</scope>
    <scope>IDENTIFICATION BY MASS SPECTROMETRY [LARGE SCALE ANALYSIS]</scope>
    <source>
        <tissue>Erythroleukemia</tissue>
    </source>
</reference>
<gene>
    <name type="primary">ARID3B</name>
    <name type="synonym">BDP</name>
    <name type="synonym">DRIL2</name>
</gene>
<accession>Q8IVW6</accession>
<accession>O95443</accession>
<accession>Q59HC9</accession>
<accession>Q6P9C9</accession>
<protein>
    <recommendedName>
        <fullName>AT-rich interactive domain-containing protein 3B</fullName>
        <shortName>ARID domain-containing protein 3B</shortName>
    </recommendedName>
    <alternativeName>
        <fullName>Bright and dead ringer protein</fullName>
    </alternativeName>
    <alternativeName>
        <fullName>Bright-like protein</fullName>
    </alternativeName>
</protein>
<feature type="chain" id="PRO_0000295162" description="AT-rich interactive domain-containing protein 3B">
    <location>
        <begin position="1"/>
        <end position="561"/>
    </location>
</feature>
<feature type="domain" description="ARID" evidence="2">
    <location>
        <begin position="215"/>
        <end position="307"/>
    </location>
</feature>
<feature type="domain" description="REKLES" evidence="3">
    <location>
        <begin position="419"/>
        <end position="517"/>
    </location>
</feature>
<feature type="region of interest" description="Disordered" evidence="4">
    <location>
        <begin position="1"/>
        <end position="36"/>
    </location>
</feature>
<feature type="region of interest" description="Disordered" evidence="4">
    <location>
        <begin position="53"/>
        <end position="122"/>
    </location>
</feature>
<feature type="region of interest" description="Disordered" evidence="4">
    <location>
        <begin position="136"/>
        <end position="179"/>
    </location>
</feature>
<feature type="region of interest" description="Interaction with RB1" evidence="5">
    <location>
        <begin position="203"/>
        <end position="365"/>
    </location>
</feature>
<feature type="region of interest" description="Disordered" evidence="4">
    <location>
        <begin position="370"/>
        <end position="397"/>
    </location>
</feature>
<feature type="region of interest" description="Interaction with ARID3A" evidence="7">
    <location>
        <begin position="490"/>
        <end position="513"/>
    </location>
</feature>
<feature type="region of interest" description="Disordered" evidence="4">
    <location>
        <begin position="523"/>
        <end position="561"/>
    </location>
</feature>
<feature type="compositionally biased region" description="Low complexity" evidence="4">
    <location>
        <begin position="1"/>
        <end position="17"/>
    </location>
</feature>
<feature type="compositionally biased region" description="Acidic residues" evidence="4">
    <location>
        <begin position="90"/>
        <end position="109"/>
    </location>
</feature>
<feature type="compositionally biased region" description="Basic and acidic residues" evidence="4">
    <location>
        <begin position="152"/>
        <end position="162"/>
    </location>
</feature>
<feature type="compositionally biased region" description="Polar residues" evidence="4">
    <location>
        <begin position="164"/>
        <end position="178"/>
    </location>
</feature>
<feature type="compositionally biased region" description="Low complexity" evidence="4">
    <location>
        <begin position="523"/>
        <end position="552"/>
    </location>
</feature>
<feature type="modified residue" description="N-acetylmethionine" evidence="12">
    <location>
        <position position="1"/>
    </location>
</feature>
<feature type="modified residue" description="Phosphoserine" evidence="11 13 14 15">
    <location>
        <position position="89"/>
    </location>
</feature>
<feature type="modified residue" description="Phosphoserine" evidence="15">
    <location>
        <position position="165"/>
    </location>
</feature>
<feature type="modified residue" description="Phosphoserine" evidence="15">
    <location>
        <position position="311"/>
    </location>
</feature>
<feature type="modified residue" description="Asymmetric dimethylarginine" evidence="1">
    <location>
        <position position="361"/>
    </location>
</feature>
<feature type="splice variant" id="VSP_026773" description="In isoform 3." evidence="9">
    <original>DGAPVTTVPVPNRLAVPVTLASQQAGTRTAALEQLRERLESGEPAEKKASRLSEEEQRLVQQAFQRNFFSMARQLPMKIRIN</original>
    <variation>QQGSWGRRKKGRKGCQFPVFKTGVLGQEGQLWIGPAPVPLQVMEPQ</variation>
    <location>
        <begin position="390"/>
        <end position="471"/>
    </location>
</feature>
<feature type="splice variant" id="VSP_026774" description="In isoform 3." evidence="9">
    <location>
        <begin position="472"/>
        <end position="561"/>
    </location>
</feature>
<feature type="splice variant" id="VSP_039860" description="In isoform 4." evidence="8">
    <location>
        <position position="474"/>
    </location>
</feature>
<feature type="mutagenesis site" description="Impairs binding to RB1." evidence="5">
    <original>P</original>
    <variation>H</variation>
    <location>
        <position position="240"/>
    </location>
</feature>
<feature type="mutagenesis site" description="Impairs binding to RB1." evidence="5">
    <original>W</original>
    <variation>S</variation>
    <location>
        <position position="271"/>
    </location>
</feature>
<feature type="sequence conflict" description="In Ref. 4; AAH41792." evidence="10" ref="4">
    <original>Q</original>
    <variation>QQ</variation>
    <location>
        <position position="7"/>
    </location>
</feature>